<proteinExistence type="evidence at transcript level"/>
<comment type="subcellular location">
    <subcellularLocation>
        <location evidence="1">Secreted</location>
    </subcellularLocation>
</comment>
<comment type="tissue specificity">
    <text>Expressed by the venom duct.</text>
</comment>
<comment type="domain">
    <text>The cysteine framework is V (CC-CC).</text>
</comment>
<comment type="PTM">
    <text evidence="4">Contains 2 disulfide bonds that can be either 'C1-C3, C2-C4' or 'C1-C4, C2-C3', since these disulfide connectivities have been observed for conotoxins with cysteine framework V (for examples, see AC P0DQQ7 and AC P81755).</text>
</comment>
<comment type="similarity">
    <text evidence="4">Belongs to the conotoxin T superfamily.</text>
</comment>
<accession>P0C640</accession>
<accession>A8RCR5</accession>
<name>CT55_CONPL</name>
<dbReference type="EMBL" id="EF488467">
    <property type="protein sequence ID" value="ABS01339.1"/>
    <property type="molecule type" value="mRNA"/>
</dbReference>
<dbReference type="SMR" id="P0C640"/>
<dbReference type="ConoServer" id="2797">
    <property type="toxin name" value="Pu5.5 precursor"/>
</dbReference>
<dbReference type="GO" id="GO:0005576">
    <property type="term" value="C:extracellular region"/>
    <property type="evidence" value="ECO:0007669"/>
    <property type="project" value="UniProtKB-SubCell"/>
</dbReference>
<dbReference type="GO" id="GO:0090729">
    <property type="term" value="F:toxin activity"/>
    <property type="evidence" value="ECO:0007669"/>
    <property type="project" value="UniProtKB-KW"/>
</dbReference>
<dbReference type="InterPro" id="IPR031565">
    <property type="entry name" value="T-conotoxin"/>
</dbReference>
<dbReference type="Pfam" id="PF16981">
    <property type="entry name" value="Chi-conotoxin"/>
    <property type="match status" value="1"/>
</dbReference>
<organism>
    <name type="scientific">Conus pulicarius</name>
    <name type="common">Flea-bitten cone</name>
    <dbReference type="NCBI Taxonomy" id="93154"/>
    <lineage>
        <taxon>Eukaryota</taxon>
        <taxon>Metazoa</taxon>
        <taxon>Spiralia</taxon>
        <taxon>Lophotrochozoa</taxon>
        <taxon>Mollusca</taxon>
        <taxon>Gastropoda</taxon>
        <taxon>Caenogastropoda</taxon>
        <taxon>Neogastropoda</taxon>
        <taxon>Conoidea</taxon>
        <taxon>Conidae</taxon>
        <taxon>Conus</taxon>
    </lineage>
</organism>
<sequence length="68" mass="7759">MRCVPVFIILLVLIASAPSVDARPQTKDDALASFRDSIKRHLQTLLDARECCPQSPPCCHYYYYGSWK</sequence>
<keyword id="KW-1015">Disulfide bond</keyword>
<keyword id="KW-0964">Secreted</keyword>
<keyword id="KW-0732">Signal</keyword>
<keyword id="KW-0800">Toxin</keyword>
<protein>
    <recommendedName>
        <fullName evidence="3">Conotoxin Pu5.5</fullName>
    </recommendedName>
</protein>
<feature type="signal peptide" evidence="2">
    <location>
        <begin position="1"/>
        <end position="22"/>
    </location>
</feature>
<feature type="propeptide" id="PRO_0000315451" evidence="1">
    <location>
        <begin position="23"/>
        <end position="49"/>
    </location>
</feature>
<feature type="peptide" id="PRO_0000315452" description="Conotoxin Pu5.5">
    <location>
        <begin position="50"/>
        <end position="67"/>
    </location>
</feature>
<reference key="1">
    <citation type="journal article" date="2007" name="Peptides">
        <title>Identification of six novel T-1 conotoxins from Conus pulicarius by molecular cloning.</title>
        <authorList>
            <person name="Peng C."/>
            <person name="Wu X."/>
            <person name="Han Y."/>
            <person name="Yuan D."/>
            <person name="Chi C."/>
            <person name="Wang C."/>
        </authorList>
    </citation>
    <scope>NUCLEOTIDE SEQUENCE [MRNA]</scope>
    <source>
        <tissue>Venom duct</tissue>
    </source>
</reference>
<evidence type="ECO:0000250" key="1"/>
<evidence type="ECO:0000255" key="2"/>
<evidence type="ECO:0000303" key="3">
    <source>
    </source>
</evidence>
<evidence type="ECO:0000305" key="4"/>